<protein>
    <recommendedName>
        <fullName evidence="1">Nicotinate phosphoribosyltransferase</fullName>
        <shortName evidence="1">NAPRTase</shortName>
        <ecNumber evidence="1">6.3.4.21</ecNumber>
    </recommendedName>
</protein>
<accession>B1LJT2</accession>
<name>PNCB_ECOSM</name>
<proteinExistence type="inferred from homology"/>
<dbReference type="EC" id="6.3.4.21" evidence="1"/>
<dbReference type="EMBL" id="CP000970">
    <property type="protein sequence ID" value="ACB18211.1"/>
    <property type="molecule type" value="Genomic_DNA"/>
</dbReference>
<dbReference type="RefSeq" id="WP_001330062.1">
    <property type="nucleotide sequence ID" value="NC_010498.1"/>
</dbReference>
<dbReference type="SMR" id="B1LJT2"/>
<dbReference type="KEGG" id="ecm:EcSMS35_2189"/>
<dbReference type="HOGENOM" id="CLU_030991_1_0_6"/>
<dbReference type="UniPathway" id="UPA00253">
    <property type="reaction ID" value="UER00457"/>
</dbReference>
<dbReference type="Proteomes" id="UP000007011">
    <property type="component" value="Chromosome"/>
</dbReference>
<dbReference type="GO" id="GO:0005829">
    <property type="term" value="C:cytosol"/>
    <property type="evidence" value="ECO:0007669"/>
    <property type="project" value="TreeGrafter"/>
</dbReference>
<dbReference type="GO" id="GO:0004516">
    <property type="term" value="F:nicotinate phosphoribosyltransferase activity"/>
    <property type="evidence" value="ECO:0007669"/>
    <property type="project" value="UniProtKB-UniRule"/>
</dbReference>
<dbReference type="GO" id="GO:0034355">
    <property type="term" value="P:NAD biosynthetic process via the salvage pathway"/>
    <property type="evidence" value="ECO:0007669"/>
    <property type="project" value="TreeGrafter"/>
</dbReference>
<dbReference type="CDD" id="cd01401">
    <property type="entry name" value="PncB_like"/>
    <property type="match status" value="1"/>
</dbReference>
<dbReference type="FunFam" id="3.20.140.10:FF:000001">
    <property type="entry name" value="Nicotinate phosphoribosyltransferase"/>
    <property type="match status" value="1"/>
</dbReference>
<dbReference type="Gene3D" id="3.20.140.10">
    <property type="entry name" value="nicotinate phosphoribosyltransferase"/>
    <property type="match status" value="1"/>
</dbReference>
<dbReference type="HAMAP" id="MF_00570">
    <property type="entry name" value="NAPRTase"/>
    <property type="match status" value="1"/>
</dbReference>
<dbReference type="InterPro" id="IPR041525">
    <property type="entry name" value="N/Namide_PRibTrfase"/>
</dbReference>
<dbReference type="InterPro" id="IPR040727">
    <property type="entry name" value="NAPRTase_N"/>
</dbReference>
<dbReference type="InterPro" id="IPR006406">
    <property type="entry name" value="Nic_PRibTrfase"/>
</dbReference>
<dbReference type="InterPro" id="IPR007229">
    <property type="entry name" value="Nic_PRibTrfase-Fam"/>
</dbReference>
<dbReference type="InterPro" id="IPR036068">
    <property type="entry name" value="Nicotinate_pribotase-like_C"/>
</dbReference>
<dbReference type="NCBIfam" id="TIGR01514">
    <property type="entry name" value="NAPRTase"/>
    <property type="match status" value="1"/>
</dbReference>
<dbReference type="NCBIfam" id="NF003704">
    <property type="entry name" value="PRK05321.1"/>
    <property type="match status" value="1"/>
</dbReference>
<dbReference type="PANTHER" id="PTHR11098">
    <property type="entry name" value="NICOTINATE PHOSPHORIBOSYLTRANSFERASE"/>
    <property type="match status" value="1"/>
</dbReference>
<dbReference type="PANTHER" id="PTHR11098:SF1">
    <property type="entry name" value="NICOTINATE PHOSPHORIBOSYLTRANSFERASE"/>
    <property type="match status" value="1"/>
</dbReference>
<dbReference type="Pfam" id="PF04095">
    <property type="entry name" value="NAPRTase"/>
    <property type="match status" value="1"/>
</dbReference>
<dbReference type="Pfam" id="PF17767">
    <property type="entry name" value="NAPRTase_N"/>
    <property type="match status" value="1"/>
</dbReference>
<dbReference type="PIRSF" id="PIRSF000484">
    <property type="entry name" value="NAPRT"/>
    <property type="match status" value="1"/>
</dbReference>
<dbReference type="SUPFAM" id="SSF51690">
    <property type="entry name" value="Nicotinate/Quinolinate PRTase C-terminal domain-like"/>
    <property type="match status" value="1"/>
</dbReference>
<dbReference type="SUPFAM" id="SSF54675">
    <property type="entry name" value="Nicotinate/Quinolinate PRTase N-terminal domain-like"/>
    <property type="match status" value="1"/>
</dbReference>
<organism>
    <name type="scientific">Escherichia coli (strain SMS-3-5 / SECEC)</name>
    <dbReference type="NCBI Taxonomy" id="439855"/>
    <lineage>
        <taxon>Bacteria</taxon>
        <taxon>Pseudomonadati</taxon>
        <taxon>Pseudomonadota</taxon>
        <taxon>Gammaproteobacteria</taxon>
        <taxon>Enterobacterales</taxon>
        <taxon>Enterobacteriaceae</taxon>
        <taxon>Escherichia</taxon>
    </lineage>
</organism>
<gene>
    <name evidence="1" type="primary">pncB</name>
    <name type="ordered locus">EcSMS35_2189</name>
</gene>
<keyword id="KW-0436">Ligase</keyword>
<keyword id="KW-0597">Phosphoprotein</keyword>
<keyword id="KW-0662">Pyridine nucleotide biosynthesis</keyword>
<comment type="function">
    <text evidence="1">Catalyzes the synthesis of beta-nicotinate D-ribonucleotide from nicotinate and 5-phospho-D-ribose 1-phosphate at the expense of ATP.</text>
</comment>
<comment type="catalytic activity">
    <reaction evidence="1">
        <text>nicotinate + 5-phospho-alpha-D-ribose 1-diphosphate + ATP + H2O = nicotinate beta-D-ribonucleotide + ADP + phosphate + diphosphate</text>
        <dbReference type="Rhea" id="RHEA:36163"/>
        <dbReference type="ChEBI" id="CHEBI:15377"/>
        <dbReference type="ChEBI" id="CHEBI:30616"/>
        <dbReference type="ChEBI" id="CHEBI:32544"/>
        <dbReference type="ChEBI" id="CHEBI:33019"/>
        <dbReference type="ChEBI" id="CHEBI:43474"/>
        <dbReference type="ChEBI" id="CHEBI:57502"/>
        <dbReference type="ChEBI" id="CHEBI:58017"/>
        <dbReference type="ChEBI" id="CHEBI:456216"/>
        <dbReference type="EC" id="6.3.4.21"/>
    </reaction>
</comment>
<comment type="pathway">
    <text evidence="1">Cofactor biosynthesis; NAD(+) biosynthesis; nicotinate D-ribonucleotide from nicotinate: step 1/1.</text>
</comment>
<comment type="PTM">
    <text evidence="1">Transiently phosphorylated on a His residue during the reaction cycle. Phosphorylation strongly increases the affinity for substrates and increases the rate of nicotinate D-ribonucleotide production. Dephosphorylation regenerates the low-affinity form of the enzyme, leading to product release.</text>
</comment>
<comment type="similarity">
    <text evidence="1">Belongs to the NAPRTase family.</text>
</comment>
<feature type="chain" id="PRO_1000129472" description="Nicotinate phosphoribosyltransferase">
    <location>
        <begin position="1"/>
        <end position="400"/>
    </location>
</feature>
<feature type="modified residue" description="Phosphohistidine; by autocatalysis" evidence="1">
    <location>
        <position position="220"/>
    </location>
</feature>
<sequence>MTQFASPVLHSLLDTDAYKLHMQQAVFHHYYDVHVAAEFRCRGDDLLGIYADAIREQVQAMQHLRLQDDEYQWLSALPFFQADYLNWLREFRFNPEQVTVSNDNGKLDIRLSGPWREVILWEVPLLAVISEMVHRYRSPQTDVAQALDTLESKLVDFSALTAGLDMSRFHLMDFGTRRRFSREVQETIVKRLQQESWFVGTSNYDLARRLSLTPMGTQAHEWFQAHQQISPDLANSQRAALAAWLEEYPDQLGIALTDCITMDAFLRDFGVEFASRYQGLRHDSGDPVEWGEKAIAHYEKLGIDPQSKTLVFSDNLDLRKAVELYRHFSSRVQLSFGIGTRLTCDIPQVKPLNIVIKLVECNGKPVAKLSDSPGKTICHDKAFVRALRKAFDLPHIKKAS</sequence>
<reference key="1">
    <citation type="journal article" date="2008" name="J. Bacteriol.">
        <title>Insights into the environmental resistance gene pool from the genome sequence of the multidrug-resistant environmental isolate Escherichia coli SMS-3-5.</title>
        <authorList>
            <person name="Fricke W.F."/>
            <person name="Wright M.S."/>
            <person name="Lindell A.H."/>
            <person name="Harkins D.M."/>
            <person name="Baker-Austin C."/>
            <person name="Ravel J."/>
            <person name="Stepanauskas R."/>
        </authorList>
    </citation>
    <scope>NUCLEOTIDE SEQUENCE [LARGE SCALE GENOMIC DNA]</scope>
    <source>
        <strain>SMS-3-5 / SECEC</strain>
    </source>
</reference>
<evidence type="ECO:0000255" key="1">
    <source>
        <dbReference type="HAMAP-Rule" id="MF_00570"/>
    </source>
</evidence>